<sequence>MMLVQLRQVGVIRSPYKNFSKAPHQGRFSKETVEIEIFPEFEDGLKDIETCTHLIVLYWLDRANRDALLVVPPHDSREHGVFATRSPHRPNPIGFAVVELLERDGRVLKVKGLDALDGTPVVDIKPYSSTIDSVGNAKIGWFEEANPQSKLTRLLLRAKEFHGHICPFVALGVRMSVIAMEKLGVEEDAMASVGEDILAIVECNNCLTDGVQVATGCTLGNNSLIYLDLGKNALTIVRRKDWKGVRVYVNAENVRKYFSKEALELFNKVIVRREGSEEDAKRLSEFWEETGWKMLEIPEEEFKVEFVEVQPIERAPIFENKRCEKCGELAMATRVKDGLCLRCAGSYYAVVGRGIVKFDGEMREVV</sequence>
<dbReference type="EMBL" id="AE000782">
    <property type="protein sequence ID" value="AAB90804.1"/>
    <property type="molecule type" value="Genomic_DNA"/>
</dbReference>
<dbReference type="PIR" id="A69304">
    <property type="entry name" value="A69304"/>
</dbReference>
<dbReference type="SMR" id="O29816"/>
<dbReference type="STRING" id="224325.AF_0433"/>
<dbReference type="PaxDb" id="224325-AF_0433"/>
<dbReference type="DNASU" id="1483649"/>
<dbReference type="EnsemblBacteria" id="AAB90804">
    <property type="protein sequence ID" value="AAB90804"/>
    <property type="gene ID" value="AF_0433"/>
</dbReference>
<dbReference type="KEGG" id="afu:AF_0433"/>
<dbReference type="eggNOG" id="arCOG00761">
    <property type="taxonomic scope" value="Archaea"/>
</dbReference>
<dbReference type="eggNOG" id="arCOG00762">
    <property type="taxonomic scope" value="Archaea"/>
</dbReference>
<dbReference type="HOGENOM" id="CLU_077622_0_0_2"/>
<dbReference type="PhylomeDB" id="O29816"/>
<dbReference type="Proteomes" id="UP000002199">
    <property type="component" value="Chromosome"/>
</dbReference>
<dbReference type="CDD" id="cd09281">
    <property type="entry name" value="UPF0066"/>
    <property type="match status" value="1"/>
</dbReference>
<dbReference type="Gene3D" id="3.30.1330.130">
    <property type="match status" value="1"/>
</dbReference>
<dbReference type="Gene3D" id="2.40.30.70">
    <property type="entry name" value="YaeB-like"/>
    <property type="match status" value="1"/>
</dbReference>
<dbReference type="InterPro" id="IPR003814">
    <property type="entry name" value="FmdEsu_dom"/>
</dbReference>
<dbReference type="InterPro" id="IPR023370">
    <property type="entry name" value="TrmO-like_N"/>
</dbReference>
<dbReference type="InterPro" id="IPR053194">
    <property type="entry name" value="tRNA_methyltr_O"/>
</dbReference>
<dbReference type="InterPro" id="IPR023368">
    <property type="entry name" value="UPF0066_cons_site"/>
</dbReference>
<dbReference type="InterPro" id="IPR036413">
    <property type="entry name" value="YaeB-like_sf"/>
</dbReference>
<dbReference type="InterPro" id="IPR036414">
    <property type="entry name" value="YaeB_N_sf"/>
</dbReference>
<dbReference type="NCBIfam" id="TIGR00104">
    <property type="entry name" value="tRNA_TsaA"/>
    <property type="match status" value="1"/>
</dbReference>
<dbReference type="PANTHER" id="PTHR39418:SF1">
    <property type="entry name" value="DEHYDROGENASE"/>
    <property type="match status" value="1"/>
</dbReference>
<dbReference type="PANTHER" id="PTHR39418">
    <property type="entry name" value="DEHYDROGENASE-RELATED"/>
    <property type="match status" value="1"/>
</dbReference>
<dbReference type="Pfam" id="PF02663">
    <property type="entry name" value="FmdE"/>
    <property type="match status" value="1"/>
</dbReference>
<dbReference type="Pfam" id="PF01980">
    <property type="entry name" value="TrmO_N"/>
    <property type="match status" value="1"/>
</dbReference>
<dbReference type="SUPFAM" id="SSF143555">
    <property type="entry name" value="FwdE-like"/>
    <property type="match status" value="1"/>
</dbReference>
<dbReference type="SUPFAM" id="SSF118196">
    <property type="entry name" value="YaeB-like"/>
    <property type="match status" value="1"/>
</dbReference>
<dbReference type="PROSITE" id="PS01318">
    <property type="entry name" value="TSAA_1"/>
    <property type="match status" value="1"/>
</dbReference>
<dbReference type="PROSITE" id="PS51668">
    <property type="entry name" value="TSAA_2"/>
    <property type="match status" value="1"/>
</dbReference>
<keyword id="KW-1185">Reference proteome</keyword>
<keyword id="KW-0949">S-adenosyl-L-methionine</keyword>
<protein>
    <recommendedName>
        <fullName>Probable S-adenosyl-L-methionine-binding protein AF_0433</fullName>
    </recommendedName>
</protein>
<proteinExistence type="inferred from homology"/>
<name>Y433_ARCFU</name>
<evidence type="ECO:0000250" key="1">
    <source>
        <dbReference type="UniProtKB" id="Q6NDF6"/>
    </source>
</evidence>
<evidence type="ECO:0000255" key="2">
    <source>
        <dbReference type="PROSITE-ProRule" id="PRU01003"/>
    </source>
</evidence>
<evidence type="ECO:0000305" key="3"/>
<comment type="similarity">
    <text evidence="3">Belongs to the tRNA methyltransferase O family.</text>
</comment>
<feature type="chain" id="PRO_0000155621" description="Probable S-adenosyl-L-methionine-binding protein AF_0433">
    <location>
        <begin position="1"/>
        <end position="366"/>
    </location>
</feature>
<feature type="domain" description="TsaA-like" evidence="2">
    <location>
        <begin position="6"/>
        <end position="136"/>
    </location>
</feature>
<feature type="binding site" evidence="1">
    <location>
        <begin position="23"/>
        <end position="25"/>
    </location>
    <ligand>
        <name>S-adenosyl-L-methionine</name>
        <dbReference type="ChEBI" id="CHEBI:59789"/>
    </ligand>
</feature>
<feature type="binding site" evidence="1">
    <location>
        <begin position="61"/>
        <end position="62"/>
    </location>
    <ligand>
        <name>S-adenosyl-L-methionine</name>
        <dbReference type="ChEBI" id="CHEBI:59789"/>
    </ligand>
</feature>
<feature type="binding site" evidence="1">
    <location>
        <position position="85"/>
    </location>
    <ligand>
        <name>S-adenosyl-L-methionine</name>
        <dbReference type="ChEBI" id="CHEBI:59789"/>
    </ligand>
</feature>
<feature type="binding site" evidence="1">
    <location>
        <begin position="116"/>
        <end position="119"/>
    </location>
    <ligand>
        <name>S-adenosyl-L-methionine</name>
        <dbReference type="ChEBI" id="CHEBI:59789"/>
    </ligand>
</feature>
<accession>O29816</accession>
<organism>
    <name type="scientific">Archaeoglobus fulgidus (strain ATCC 49558 / DSM 4304 / JCM 9628 / NBRC 100126 / VC-16)</name>
    <dbReference type="NCBI Taxonomy" id="224325"/>
    <lineage>
        <taxon>Archaea</taxon>
        <taxon>Methanobacteriati</taxon>
        <taxon>Methanobacteriota</taxon>
        <taxon>Archaeoglobi</taxon>
        <taxon>Archaeoglobales</taxon>
        <taxon>Archaeoglobaceae</taxon>
        <taxon>Archaeoglobus</taxon>
    </lineage>
</organism>
<reference key="1">
    <citation type="journal article" date="1997" name="Nature">
        <title>The complete genome sequence of the hyperthermophilic, sulphate-reducing archaeon Archaeoglobus fulgidus.</title>
        <authorList>
            <person name="Klenk H.-P."/>
            <person name="Clayton R.A."/>
            <person name="Tomb J.-F."/>
            <person name="White O."/>
            <person name="Nelson K.E."/>
            <person name="Ketchum K.A."/>
            <person name="Dodson R.J."/>
            <person name="Gwinn M.L."/>
            <person name="Hickey E.K."/>
            <person name="Peterson J.D."/>
            <person name="Richardson D.L."/>
            <person name="Kerlavage A.R."/>
            <person name="Graham D.E."/>
            <person name="Kyrpides N.C."/>
            <person name="Fleischmann R.D."/>
            <person name="Quackenbush J."/>
            <person name="Lee N.H."/>
            <person name="Sutton G.G."/>
            <person name="Gill S.R."/>
            <person name="Kirkness E.F."/>
            <person name="Dougherty B.A."/>
            <person name="McKenney K."/>
            <person name="Adams M.D."/>
            <person name="Loftus B.J."/>
            <person name="Peterson S.N."/>
            <person name="Reich C.I."/>
            <person name="McNeil L.K."/>
            <person name="Badger J.H."/>
            <person name="Glodek A."/>
            <person name="Zhou L."/>
            <person name="Overbeek R."/>
            <person name="Gocayne J.D."/>
            <person name="Weidman J.F."/>
            <person name="McDonald L.A."/>
            <person name="Utterback T.R."/>
            <person name="Cotton M.D."/>
            <person name="Spriggs T."/>
            <person name="Artiach P."/>
            <person name="Kaine B.P."/>
            <person name="Sykes S.M."/>
            <person name="Sadow P.W."/>
            <person name="D'Andrea K.P."/>
            <person name="Bowman C."/>
            <person name="Fujii C."/>
            <person name="Garland S.A."/>
            <person name="Mason T.M."/>
            <person name="Olsen G.J."/>
            <person name="Fraser C.M."/>
            <person name="Smith H.O."/>
            <person name="Woese C.R."/>
            <person name="Venter J.C."/>
        </authorList>
    </citation>
    <scope>NUCLEOTIDE SEQUENCE [LARGE SCALE GENOMIC DNA]</scope>
    <source>
        <strain>ATCC 49558 / DSM 4304 / JCM 9628 / NBRC 100126 / VC-16</strain>
    </source>
</reference>
<gene>
    <name type="ordered locus">AF_0433</name>
</gene>